<gene>
    <name type="ordered locus">Psyc_0118</name>
</gene>
<keyword id="KW-0067">ATP-binding</keyword>
<keyword id="KW-0342">GTP-binding</keyword>
<keyword id="KW-0547">Nucleotide-binding</keyword>
<keyword id="KW-1185">Reference proteome</keyword>
<organism>
    <name type="scientific">Psychrobacter arcticus (strain DSM 17307 / VKM B-2377 / 273-4)</name>
    <dbReference type="NCBI Taxonomy" id="259536"/>
    <lineage>
        <taxon>Bacteria</taxon>
        <taxon>Pseudomonadati</taxon>
        <taxon>Pseudomonadota</taxon>
        <taxon>Gammaproteobacteria</taxon>
        <taxon>Moraxellales</taxon>
        <taxon>Moraxellaceae</taxon>
        <taxon>Psychrobacter</taxon>
    </lineage>
</organism>
<feature type="chain" id="PRO_0000258985" description="Nucleotide-binding protein Psyc_0118">
    <location>
        <begin position="1"/>
        <end position="320"/>
    </location>
</feature>
<feature type="binding site" evidence="1">
    <location>
        <begin position="32"/>
        <end position="39"/>
    </location>
    <ligand>
        <name>ATP</name>
        <dbReference type="ChEBI" id="CHEBI:30616"/>
    </ligand>
</feature>
<feature type="binding site" evidence="1">
    <location>
        <begin position="82"/>
        <end position="85"/>
    </location>
    <ligand>
        <name>GTP</name>
        <dbReference type="ChEBI" id="CHEBI:37565"/>
    </ligand>
</feature>
<dbReference type="EMBL" id="CP000082">
    <property type="protein sequence ID" value="AAZ17992.1"/>
    <property type="molecule type" value="Genomic_DNA"/>
</dbReference>
<dbReference type="RefSeq" id="WP_011279431.1">
    <property type="nucleotide sequence ID" value="NC_007204.1"/>
</dbReference>
<dbReference type="SMR" id="Q4FVG6"/>
<dbReference type="STRING" id="259536.Psyc_0118"/>
<dbReference type="KEGG" id="par:Psyc_0118"/>
<dbReference type="eggNOG" id="COG1660">
    <property type="taxonomic scope" value="Bacteria"/>
</dbReference>
<dbReference type="HOGENOM" id="CLU_059558_1_1_6"/>
<dbReference type="OrthoDB" id="9784461at2"/>
<dbReference type="Proteomes" id="UP000000546">
    <property type="component" value="Chromosome"/>
</dbReference>
<dbReference type="GO" id="GO:0005524">
    <property type="term" value="F:ATP binding"/>
    <property type="evidence" value="ECO:0007669"/>
    <property type="project" value="UniProtKB-UniRule"/>
</dbReference>
<dbReference type="GO" id="GO:0005525">
    <property type="term" value="F:GTP binding"/>
    <property type="evidence" value="ECO:0007669"/>
    <property type="project" value="UniProtKB-UniRule"/>
</dbReference>
<dbReference type="HAMAP" id="MF_00636">
    <property type="entry name" value="RapZ_like"/>
    <property type="match status" value="1"/>
</dbReference>
<dbReference type="InterPro" id="IPR027417">
    <property type="entry name" value="P-loop_NTPase"/>
</dbReference>
<dbReference type="InterPro" id="IPR005337">
    <property type="entry name" value="RapZ-like"/>
</dbReference>
<dbReference type="InterPro" id="IPR053930">
    <property type="entry name" value="RapZ-like_N"/>
</dbReference>
<dbReference type="InterPro" id="IPR053931">
    <property type="entry name" value="RapZ_C"/>
</dbReference>
<dbReference type="NCBIfam" id="NF003828">
    <property type="entry name" value="PRK05416.1"/>
    <property type="match status" value="1"/>
</dbReference>
<dbReference type="PANTHER" id="PTHR30448">
    <property type="entry name" value="RNASE ADAPTER PROTEIN RAPZ"/>
    <property type="match status" value="1"/>
</dbReference>
<dbReference type="PANTHER" id="PTHR30448:SF0">
    <property type="entry name" value="RNASE ADAPTER PROTEIN RAPZ"/>
    <property type="match status" value="1"/>
</dbReference>
<dbReference type="Pfam" id="PF22740">
    <property type="entry name" value="PapZ_C"/>
    <property type="match status" value="1"/>
</dbReference>
<dbReference type="Pfam" id="PF03668">
    <property type="entry name" value="RapZ-like_N"/>
    <property type="match status" value="1"/>
</dbReference>
<dbReference type="PIRSF" id="PIRSF005052">
    <property type="entry name" value="P-loopkin"/>
    <property type="match status" value="1"/>
</dbReference>
<dbReference type="SUPFAM" id="SSF52540">
    <property type="entry name" value="P-loop containing nucleoside triphosphate hydrolases"/>
    <property type="match status" value="1"/>
</dbReference>
<proteinExistence type="inferred from homology"/>
<name>Y118_PSYA2</name>
<accession>Q4FVG6</accession>
<reference key="1">
    <citation type="journal article" date="2010" name="Appl. Environ. Microbiol.">
        <title>The genome sequence of Psychrobacter arcticus 273-4, a psychroactive Siberian permafrost bacterium, reveals mechanisms for adaptation to low-temperature growth.</title>
        <authorList>
            <person name="Ayala-del-Rio H.L."/>
            <person name="Chain P.S."/>
            <person name="Grzymski J.J."/>
            <person name="Ponder M.A."/>
            <person name="Ivanova N."/>
            <person name="Bergholz P.W."/>
            <person name="Di Bartolo G."/>
            <person name="Hauser L."/>
            <person name="Land M."/>
            <person name="Bakermans C."/>
            <person name="Rodrigues D."/>
            <person name="Klappenbach J."/>
            <person name="Zarka D."/>
            <person name="Larimer F."/>
            <person name="Richardson P."/>
            <person name="Murray A."/>
            <person name="Thomashow M."/>
            <person name="Tiedje J.M."/>
        </authorList>
    </citation>
    <scope>NUCLEOTIDE SEQUENCE [LARGE SCALE GENOMIC DNA]</scope>
    <source>
        <strain>DSM 17307 / VKM B-2377 / 273-4</strain>
    </source>
</reference>
<sequence length="320" mass="35729">MKVNQDTHNAQPKLIDSNESVGDRLNILVVSGRSGSGKTSVLNILEDLGFYSIDNLPLSLVPEAVQKLVCDSGIKRIALGVDIRTPRADLSNFAAIHDSLKQAYGEEAVTVMYVTAQEETLVARFNATRRIHPLMVLDTKGVENTAYNLPAAIEKEIQLLQPICKYADIKIDTSMLNIHQLKERLRDYVGVDNQIVINLLSFGFKYGSPIDADFVFDVRILPNPHWNPTLRAATGLDAEVGEFFADYPEVTEMTGDIATFLNRWLPDFLHNNRHTVTVAIGCTGGKHRSVFITKHLQDSLQNSLPEGLTVTAKHREKHRW</sequence>
<protein>
    <recommendedName>
        <fullName evidence="1">Nucleotide-binding protein Psyc_0118</fullName>
    </recommendedName>
</protein>
<comment type="function">
    <text evidence="1">Displays ATPase and GTPase activities.</text>
</comment>
<comment type="similarity">
    <text evidence="1">Belongs to the RapZ-like family.</text>
</comment>
<evidence type="ECO:0000255" key="1">
    <source>
        <dbReference type="HAMAP-Rule" id="MF_00636"/>
    </source>
</evidence>